<sequence>MSNDREVPTLSQLNTTVSRDKDVSDTLSPDFDSKGSATGRDGGNFPMYIAINEYFKRMEDELDMKPGDKIKVITDDEEYKDGWYFGRNLRTNEEGLYPVVFTQKITVEKAPTLMRAKSTKRIYSPLTNEDPLLSSTFISENDSNSELPTPQPIETAASISRTANGKIERNLSLKNTMSDIDNALLEFKDDSIGPPDRFINSGRDEEHSITHETILSATDGLDVVESNSKPTTSSSTGFLNGDLENQATLINGIDTTKLNPVEAEFWSPEEITAYFIMEGYDVQSASRFQKHKISGKILLELELVHLKELDINSFGTRFEIFKEIEKIKEAIRTNGRSLNRASKTNNANIYNQLMPPANVDQRASYRGHVRKTSQSLEDLPSQQNFIPTPRNTRNSSASKHRPKSLVFDSQEANANIAPDVQIPQVVEEMAGNENLFVSPRRAPKPPSYPSPAQPPKSPLLNNTRTSPSPAQLYSWQSPTLSFSGPKRTSYIDQYSSSDSNFNSRSALPKNNQGGGKALSPIPSPTRNSVRNEDSEGKLTSSSKRNSVPYYGYAPESSSDRKSSCSSHEEEQFQETMNTFERPTSSIYADGSTIASISNDKLAHEKEGKKKPTRHSSSLSSKSKSDSRRNSSLKRSSSASRTSSFKKSSFMLSPFRQQFTDNAARSSSPEENPITSMPSEKNSSPIVDKKSSKKSRSKRRSVSAKEAEIFTETVKDDKNKRSASEAIKGETLKGKSLRQMTARPVAKKKQTSAFIEGLRSISVKEAMKDADFSGWMSKKGSGAMSTWKTRFFTLHGTRLSYFSSTTDTRERGLIDITAHRVVPAKEDDKLVSLYAASTGKGRYCFKLLPPQPGSKKGLTFTQPRTHYFAVDNKEEMRGWMAALIKTTIDIDTSVPIISSYTTPTVSLSKAQEMLAEAREETKLREQQMLENEEDEDQFLWDQQQLQQQQHDNNQGQADRTISASTQRTSDEDNTISTPNLSSANNTTIGSNGFSSPFLLASGLLSPGVARNSSMRGTEKKGKFSTEEDYFGDNSKHKTDKI</sequence>
<name>BOI2_YEAST</name>
<comment type="function">
    <text evidence="7 9 10">Protein involved in bud formation (PubMed:8666671). Functions redundantly with BOI1 to promote the fusion of secretory vesicles with the plasma membrane at sites of polarized growth (PubMed:28904204, PubMed:8666672). Acts as an abscission inhibitor during cytokinesis in response to chromatin bridges (PubMed:28904204).</text>
</comment>
<comment type="subunit">
    <text evidence="8 9 10">Interacts with BEM1 (PubMed:8666671, PubMed:8666672). Interacts with TOS7 (PubMed:33002606).</text>
</comment>
<comment type="interaction">
    <interactant intactId="EBI-3727">
        <id>P39969</id>
    </interactant>
    <interactant intactId="EBI-3508">
        <id>P29366</id>
        <label>BEM1</label>
    </interactant>
    <organismsDiffer>false</organismsDiffer>
    <experiments>6</experiments>
</comment>
<comment type="interaction">
    <interactant intactId="EBI-3727">
        <id>P39969</id>
    </interactant>
    <interactant intactId="EBI-22676">
        <id>P40077</id>
        <label>DSE1</label>
    </interactant>
    <organismsDiffer>false</organismsDiffer>
    <experiments>3</experiments>
</comment>
<comment type="interaction">
    <interactant intactId="EBI-3727">
        <id>P39969</id>
    </interactant>
    <interactant intactId="EBI-13431">
        <id>P40020</id>
        <label>FIR1</label>
    </interactant>
    <organismsDiffer>false</organismsDiffer>
    <experiments>2</experiments>
</comment>
<comment type="interaction">
    <interactant intactId="EBI-3727">
        <id>P39969</id>
    </interactant>
    <interactant intactId="EBI-30094">
        <id>Q03780</id>
        <label>YDR239C</label>
    </interactant>
    <organismsDiffer>false</organismsDiffer>
    <experiments>2</experiments>
</comment>
<comment type="interaction">
    <interactant intactId="EBI-3727">
        <id>P39969</id>
    </interactant>
    <interactant intactId="EBI-22734">
        <id>P40095</id>
        <label>YER158C</label>
    </interactant>
    <organismsDiffer>false</organismsDiffer>
    <experiments>3</experiments>
</comment>
<comment type="subcellular location">
    <subcellularLocation>
        <location evidence="5">Bud</location>
    </subcellularLocation>
    <subcellularLocation>
        <location evidence="5">Bud neck</location>
    </subcellularLocation>
    <text evidence="5">Localizes to the periphery of buds during much of the budding cycle and to necks late in the cell cycle.</text>
</comment>
<comment type="disruption phenotype">
    <text evidence="7">Leads to the accumulation of secretory vesicles and impairs bud growth.</text>
</comment>
<comment type="miscellaneous">
    <text evidence="6">Present with 688 molecules/cell in log phase SD medium.</text>
</comment>
<organism>
    <name type="scientific">Saccharomyces cerevisiae (strain ATCC 204508 / S288c)</name>
    <name type="common">Baker's yeast</name>
    <dbReference type="NCBI Taxonomy" id="559292"/>
    <lineage>
        <taxon>Eukaryota</taxon>
        <taxon>Fungi</taxon>
        <taxon>Dikarya</taxon>
        <taxon>Ascomycota</taxon>
        <taxon>Saccharomycotina</taxon>
        <taxon>Saccharomycetes</taxon>
        <taxon>Saccharomycetales</taxon>
        <taxon>Saccharomycetaceae</taxon>
        <taxon>Saccharomyces</taxon>
    </lineage>
</organism>
<keyword id="KW-0131">Cell cycle</keyword>
<keyword id="KW-0132">Cell division</keyword>
<keyword id="KW-0268">Exocytosis</keyword>
<keyword id="KW-0597">Phosphoprotein</keyword>
<keyword id="KW-1185">Reference proteome</keyword>
<keyword id="KW-0728">SH3 domain</keyword>
<reference key="1">
    <citation type="journal article" date="1996" name="J. Cell Biol.">
        <title>Yeast src homology region 3 domain-binding proteins involved in bud formation.</title>
        <authorList>
            <person name="Matsui Y."/>
            <person name="Matsui R."/>
            <person name="Akada R."/>
            <person name="Toh-e A."/>
        </authorList>
    </citation>
    <scope>NUCLEOTIDE SEQUENCE [GENOMIC DNA]</scope>
    <scope>FUNCTION</scope>
    <scope>INTERACTION WITH BEM1</scope>
</reference>
<reference key="2">
    <citation type="journal article" date="1997" name="Nature">
        <title>The nucleotide sequence of Saccharomyces cerevisiae chromosome V.</title>
        <authorList>
            <person name="Dietrich F.S."/>
            <person name="Mulligan J.T."/>
            <person name="Hennessy K.M."/>
            <person name="Yelton M.A."/>
            <person name="Allen E."/>
            <person name="Araujo R."/>
            <person name="Aviles E."/>
            <person name="Berno A."/>
            <person name="Brennan T."/>
            <person name="Carpenter J."/>
            <person name="Chen E."/>
            <person name="Cherry J.M."/>
            <person name="Chung E."/>
            <person name="Duncan M."/>
            <person name="Guzman E."/>
            <person name="Hartzell G."/>
            <person name="Hunicke-Smith S."/>
            <person name="Hyman R.W."/>
            <person name="Kayser A."/>
            <person name="Komp C."/>
            <person name="Lashkari D."/>
            <person name="Lew H."/>
            <person name="Lin D."/>
            <person name="Mosedale D."/>
            <person name="Nakahara K."/>
            <person name="Namath A."/>
            <person name="Norgren R."/>
            <person name="Oefner P."/>
            <person name="Oh C."/>
            <person name="Petel F.X."/>
            <person name="Roberts D."/>
            <person name="Sehl P."/>
            <person name="Schramm S."/>
            <person name="Shogren T."/>
            <person name="Smith V."/>
            <person name="Taylor P."/>
            <person name="Wei Y."/>
            <person name="Botstein D."/>
            <person name="Davis R.W."/>
        </authorList>
    </citation>
    <scope>NUCLEOTIDE SEQUENCE [LARGE SCALE GENOMIC DNA]</scope>
    <source>
        <strain>ATCC 204508 / S288c</strain>
    </source>
</reference>
<reference key="3">
    <citation type="journal article" date="2014" name="G3 (Bethesda)">
        <title>The reference genome sequence of Saccharomyces cerevisiae: Then and now.</title>
        <authorList>
            <person name="Engel S.R."/>
            <person name="Dietrich F.S."/>
            <person name="Fisk D.G."/>
            <person name="Binkley G."/>
            <person name="Balakrishnan R."/>
            <person name="Costanzo M.C."/>
            <person name="Dwight S.S."/>
            <person name="Hitz B.C."/>
            <person name="Karra K."/>
            <person name="Nash R.S."/>
            <person name="Weng S."/>
            <person name="Wong E.D."/>
            <person name="Lloyd P."/>
            <person name="Skrzypek M.S."/>
            <person name="Miyasato S.R."/>
            <person name="Simison M."/>
            <person name="Cherry J.M."/>
        </authorList>
    </citation>
    <scope>GENOME REANNOTATION</scope>
    <source>
        <strain>ATCC 204508 / S288c</strain>
    </source>
</reference>
<reference key="4">
    <citation type="journal article" date="1996" name="J. Cell Biol.">
        <title>Associations among PH and SH3 domain-containing proteins and Rho-type GTPases in Yeast.</title>
        <authorList>
            <person name="Bender L."/>
            <person name="Lo H.S."/>
            <person name="Lee H."/>
            <person name="Kokojan V."/>
            <person name="Peterson V."/>
            <person name="Bender A."/>
        </authorList>
    </citation>
    <scope>FUNCTION</scope>
    <scope>INTERACTION WITH BEM1</scope>
</reference>
<reference key="5">
    <citation type="journal article" date="2002" name="BMC Cell Biol.">
        <title>Probing the importance and potential roles of the binding of the PH-domain protein Boi1 to acidic phospholipids.</title>
        <authorList>
            <person name="Hallett M.A."/>
            <person name="Lo H.S."/>
            <person name="Bender A."/>
        </authorList>
    </citation>
    <scope>SUBCELLULAR LOCATION</scope>
</reference>
<reference key="6">
    <citation type="journal article" date="2003" name="Nature">
        <title>Global analysis of protein expression in yeast.</title>
        <authorList>
            <person name="Ghaemmaghami S."/>
            <person name="Huh W.-K."/>
            <person name="Bower K."/>
            <person name="Howson R.W."/>
            <person name="Belle A."/>
            <person name="Dephoure N."/>
            <person name="O'Shea E.K."/>
            <person name="Weissman J.S."/>
        </authorList>
    </citation>
    <scope>LEVEL OF PROTEIN EXPRESSION [LARGE SCALE ANALYSIS]</scope>
</reference>
<reference key="7">
    <citation type="journal article" date="2007" name="J. Proteome Res.">
        <title>Large-scale phosphorylation analysis of alpha-factor-arrested Saccharomyces cerevisiae.</title>
        <authorList>
            <person name="Li X."/>
            <person name="Gerber S.A."/>
            <person name="Rudner A.D."/>
            <person name="Beausoleil S.A."/>
            <person name="Haas W."/>
            <person name="Villen J."/>
            <person name="Elias J.E."/>
            <person name="Gygi S.P."/>
        </authorList>
    </citation>
    <scope>PHOSPHORYLATION [LARGE SCALE ANALYSIS] AT SER-18; SER-28; SER-450; SER-519; SER-523 AND SER-652</scope>
    <scope>IDENTIFICATION BY MASS SPECTROMETRY [LARGE SCALE ANALYSIS]</scope>
    <source>
        <strain>ADR376</strain>
    </source>
</reference>
<reference key="8">
    <citation type="journal article" date="2007" name="Proc. Natl. Acad. Sci. U.S.A.">
        <title>Analysis of phosphorylation sites on proteins from Saccharomyces cerevisiae by electron transfer dissociation (ETD) mass spectrometry.</title>
        <authorList>
            <person name="Chi A."/>
            <person name="Huttenhower C."/>
            <person name="Geer L.Y."/>
            <person name="Coon J.J."/>
            <person name="Syka J.E.P."/>
            <person name="Bai D.L."/>
            <person name="Shabanowitz J."/>
            <person name="Burke D.J."/>
            <person name="Troyanskaya O.G."/>
            <person name="Hunt D.F."/>
        </authorList>
    </citation>
    <scope>PHOSPHORYLATION [LARGE SCALE ANALYSIS] AT SER-519</scope>
    <scope>IDENTIFICATION BY MASS SPECTROMETRY [LARGE SCALE ANALYSIS]</scope>
</reference>
<reference key="9">
    <citation type="journal article" date="2008" name="Mol. Cell. Proteomics">
        <title>A multidimensional chromatography technology for in-depth phosphoproteome analysis.</title>
        <authorList>
            <person name="Albuquerque C.P."/>
            <person name="Smolka M.B."/>
            <person name="Payne S.H."/>
            <person name="Bafna V."/>
            <person name="Eng J."/>
            <person name="Zhou H."/>
        </authorList>
    </citation>
    <scope>PHOSPHORYLATION [LARGE SCALE ANALYSIS] AT SER-18; SER-519 AND SER-546</scope>
    <scope>IDENTIFICATION BY MASS SPECTROMETRY [LARGE SCALE ANALYSIS]</scope>
</reference>
<reference key="10">
    <citation type="journal article" date="2009" name="Science">
        <title>Global analysis of Cdk1 substrate phosphorylation sites provides insights into evolution.</title>
        <authorList>
            <person name="Holt L.J."/>
            <person name="Tuch B.B."/>
            <person name="Villen J."/>
            <person name="Johnson A.D."/>
            <person name="Gygi S.P."/>
            <person name="Morgan D.O."/>
        </authorList>
    </citation>
    <scope>PHOSPHORYLATION [LARGE SCALE ANALYSIS] AT SER-18; SER-24; SER-519; SER-523 AND SER-546</scope>
    <scope>IDENTIFICATION BY MASS SPECTROMETRY [LARGE SCALE ANALYSIS]</scope>
</reference>
<reference key="11">
    <citation type="journal article" date="2017" name="Mol. Biol. Cell">
        <title>Distinct roles of the polarity factors Boi1 and Boi2 in the control of exocytosis and abscission in budding yeast.</title>
        <authorList>
            <person name="Masgrau A."/>
            <person name="Battola A."/>
            <person name="Sanmartin T."/>
            <person name="Pryszcz L.P."/>
            <person name="Gabaldon T."/>
            <person name="Mendoza M."/>
        </authorList>
    </citation>
    <scope>FUNCTION</scope>
    <scope>DISRUPTION PHENOTYPE</scope>
</reference>
<reference key="12">
    <citation type="journal article" date="2020" name="Fungal Genet. Biol.">
        <title>The Sur7/PalI family transmembrane protein Tos7 (Yol019w) plays a role in secretion in budding yeast.</title>
        <authorList>
            <person name="Zhu J."/>
            <person name="Jia Z.W."/>
            <person name="Xia C.Y."/>
            <person name="Gao X.D."/>
        </authorList>
    </citation>
    <scope>INTERACTION WITH TOS7</scope>
</reference>
<feature type="chain" id="PRO_0000064970" description="BEM1-interacting protein 2">
    <location>
        <begin position="1"/>
        <end position="1040"/>
    </location>
</feature>
<feature type="domain" description="SH3" evidence="3">
    <location>
        <begin position="43"/>
        <end position="107"/>
    </location>
</feature>
<feature type="domain" description="SAM" evidence="2">
    <location>
        <begin position="266"/>
        <end position="330"/>
    </location>
</feature>
<feature type="domain" description="PH" evidence="1">
    <location>
        <begin position="768"/>
        <end position="887"/>
    </location>
</feature>
<feature type="region of interest" description="Disordered" evidence="4">
    <location>
        <begin position="1"/>
        <end position="39"/>
    </location>
</feature>
<feature type="region of interest" description="Disordered" evidence="4">
    <location>
        <begin position="365"/>
        <end position="412"/>
    </location>
</feature>
<feature type="region of interest" description="Disordered" evidence="4">
    <location>
        <begin position="437"/>
        <end position="478"/>
    </location>
</feature>
<feature type="region of interest" description="Disordered" evidence="4">
    <location>
        <begin position="491"/>
        <end position="744"/>
    </location>
</feature>
<feature type="region of interest" description="Disordered" evidence="4">
    <location>
        <begin position="943"/>
        <end position="986"/>
    </location>
</feature>
<feature type="region of interest" description="Disordered" evidence="4">
    <location>
        <begin position="1007"/>
        <end position="1040"/>
    </location>
</feature>
<feature type="compositionally biased region" description="Polar residues" evidence="4">
    <location>
        <begin position="8"/>
        <end position="17"/>
    </location>
</feature>
<feature type="compositionally biased region" description="Polar residues" evidence="4">
    <location>
        <begin position="372"/>
        <end position="397"/>
    </location>
</feature>
<feature type="compositionally biased region" description="Pro residues" evidence="4">
    <location>
        <begin position="444"/>
        <end position="457"/>
    </location>
</feature>
<feature type="compositionally biased region" description="Polar residues" evidence="4">
    <location>
        <begin position="459"/>
        <end position="478"/>
    </location>
</feature>
<feature type="compositionally biased region" description="Low complexity" evidence="4">
    <location>
        <begin position="495"/>
        <end position="505"/>
    </location>
</feature>
<feature type="compositionally biased region" description="Basic and acidic residues" evidence="4">
    <location>
        <begin position="557"/>
        <end position="570"/>
    </location>
</feature>
<feature type="compositionally biased region" description="Polar residues" evidence="4">
    <location>
        <begin position="573"/>
        <end position="598"/>
    </location>
</feature>
<feature type="compositionally biased region" description="Basic and acidic residues" evidence="4">
    <location>
        <begin position="600"/>
        <end position="609"/>
    </location>
</feature>
<feature type="compositionally biased region" description="Low complexity" evidence="4">
    <location>
        <begin position="632"/>
        <end position="648"/>
    </location>
</feature>
<feature type="compositionally biased region" description="Polar residues" evidence="4">
    <location>
        <begin position="654"/>
        <end position="684"/>
    </location>
</feature>
<feature type="compositionally biased region" description="Basic residues" evidence="4">
    <location>
        <begin position="690"/>
        <end position="701"/>
    </location>
</feature>
<feature type="compositionally biased region" description="Basic and acidic residues" evidence="4">
    <location>
        <begin position="702"/>
        <end position="732"/>
    </location>
</feature>
<feature type="compositionally biased region" description="Low complexity" evidence="4">
    <location>
        <begin position="943"/>
        <end position="957"/>
    </location>
</feature>
<feature type="compositionally biased region" description="Polar residues" evidence="4">
    <location>
        <begin position="973"/>
        <end position="986"/>
    </location>
</feature>
<feature type="compositionally biased region" description="Basic and acidic residues" evidence="4">
    <location>
        <begin position="1015"/>
        <end position="1024"/>
    </location>
</feature>
<feature type="modified residue" description="Phosphoserine" evidence="14 15 16">
    <location>
        <position position="18"/>
    </location>
</feature>
<feature type="modified residue" description="Phosphoserine" evidence="16">
    <location>
        <position position="24"/>
    </location>
</feature>
<feature type="modified residue" description="Phosphoserine" evidence="14">
    <location>
        <position position="28"/>
    </location>
</feature>
<feature type="modified residue" description="Phosphoserine" evidence="14">
    <location>
        <position position="450"/>
    </location>
</feature>
<feature type="modified residue" description="Phosphoserine" evidence="13 14 15 16">
    <location>
        <position position="519"/>
    </location>
</feature>
<feature type="modified residue" description="Phosphoserine" evidence="14 16">
    <location>
        <position position="523"/>
    </location>
</feature>
<feature type="modified residue" description="Phosphoserine" evidence="15 16">
    <location>
        <position position="546"/>
    </location>
</feature>
<feature type="modified residue" description="Phosphoserine" evidence="14">
    <location>
        <position position="652"/>
    </location>
</feature>
<feature type="sequence conflict" description="In Ref. 1; BAA07427." evidence="12" ref="1">
    <original>G</original>
    <variation>A</variation>
    <location>
        <position position="733"/>
    </location>
</feature>
<evidence type="ECO:0000255" key="1">
    <source>
        <dbReference type="PROSITE-ProRule" id="PRU00145"/>
    </source>
</evidence>
<evidence type="ECO:0000255" key="2">
    <source>
        <dbReference type="PROSITE-ProRule" id="PRU00184"/>
    </source>
</evidence>
<evidence type="ECO:0000255" key="3">
    <source>
        <dbReference type="PROSITE-ProRule" id="PRU00192"/>
    </source>
</evidence>
<evidence type="ECO:0000256" key="4">
    <source>
        <dbReference type="SAM" id="MobiDB-lite"/>
    </source>
</evidence>
<evidence type="ECO:0000269" key="5">
    <source>
    </source>
</evidence>
<evidence type="ECO:0000269" key="6">
    <source>
    </source>
</evidence>
<evidence type="ECO:0000269" key="7">
    <source>
    </source>
</evidence>
<evidence type="ECO:0000269" key="8">
    <source>
    </source>
</evidence>
<evidence type="ECO:0000269" key="9">
    <source>
    </source>
</evidence>
<evidence type="ECO:0000269" key="10">
    <source>
    </source>
</evidence>
<evidence type="ECO:0000303" key="11">
    <source>
    </source>
</evidence>
<evidence type="ECO:0000305" key="12"/>
<evidence type="ECO:0007744" key="13">
    <source>
    </source>
</evidence>
<evidence type="ECO:0007744" key="14">
    <source>
    </source>
</evidence>
<evidence type="ECO:0007744" key="15">
    <source>
    </source>
</evidence>
<evidence type="ECO:0007744" key="16">
    <source>
    </source>
</evidence>
<gene>
    <name evidence="11" type="primary">BOI2</name>
    <name type="synonym">BEB1</name>
    <name type="ordered locus">YER114C</name>
</gene>
<protein>
    <recommendedName>
        <fullName evidence="11">BEM1-interacting protein 2</fullName>
    </recommendedName>
</protein>
<accession>P39969</accession>
<accession>D3DM20</accession>
<proteinExistence type="evidence at protein level"/>
<dbReference type="EMBL" id="D38310">
    <property type="protein sequence ID" value="BAA07427.1"/>
    <property type="molecule type" value="Genomic_DNA"/>
</dbReference>
<dbReference type="EMBL" id="U18916">
    <property type="protein sequence ID" value="AAC03212.1"/>
    <property type="molecule type" value="Genomic_DNA"/>
</dbReference>
<dbReference type="EMBL" id="BK006939">
    <property type="protein sequence ID" value="DAA07774.1"/>
    <property type="molecule type" value="Genomic_DNA"/>
</dbReference>
<dbReference type="PIR" id="S50617">
    <property type="entry name" value="S50617"/>
</dbReference>
<dbReference type="RefSeq" id="NP_011039.1">
    <property type="nucleotide sequence ID" value="NM_001179004.1"/>
</dbReference>
<dbReference type="SMR" id="P39969"/>
<dbReference type="BioGRID" id="36859">
    <property type="interactions" value="136"/>
</dbReference>
<dbReference type="DIP" id="DIP-2227N"/>
<dbReference type="FunCoup" id="P39969">
    <property type="interactions" value="137"/>
</dbReference>
<dbReference type="IntAct" id="P39969">
    <property type="interactions" value="36"/>
</dbReference>
<dbReference type="MINT" id="P39969"/>
<dbReference type="STRING" id="4932.YER114C"/>
<dbReference type="CarbonylDB" id="P39969"/>
<dbReference type="GlyGen" id="P39969">
    <property type="glycosylation" value="1 site, 1 O-linked glycan (1 site)"/>
</dbReference>
<dbReference type="iPTMnet" id="P39969"/>
<dbReference type="PaxDb" id="4932-YER114C"/>
<dbReference type="PeptideAtlas" id="P39969"/>
<dbReference type="EnsemblFungi" id="YER114C_mRNA">
    <property type="protein sequence ID" value="YER114C"/>
    <property type="gene ID" value="YER114C"/>
</dbReference>
<dbReference type="GeneID" id="856850"/>
<dbReference type="KEGG" id="sce:YER114C"/>
<dbReference type="AGR" id="SGD:S000000916"/>
<dbReference type="SGD" id="S000000916">
    <property type="gene designation" value="BOI2"/>
</dbReference>
<dbReference type="VEuPathDB" id="FungiDB:YER114C"/>
<dbReference type="eggNOG" id="ENOG502QPMX">
    <property type="taxonomic scope" value="Eukaryota"/>
</dbReference>
<dbReference type="GeneTree" id="ENSGT00950000182882"/>
<dbReference type="HOGENOM" id="CLU_003845_0_0_1"/>
<dbReference type="InParanoid" id="P39969"/>
<dbReference type="OMA" id="YYGWMKK"/>
<dbReference type="OrthoDB" id="73680at2759"/>
<dbReference type="BioCyc" id="YEAST:G3O-30278-MONOMER"/>
<dbReference type="Reactome" id="R-SCE-1660499">
    <property type="pathway name" value="Synthesis of PIPs at the plasma membrane"/>
</dbReference>
<dbReference type="BioGRID-ORCS" id="856850">
    <property type="hits" value="0 hits in 10 CRISPR screens"/>
</dbReference>
<dbReference type="CD-CODE" id="E03F929F">
    <property type="entry name" value="Stress granule"/>
</dbReference>
<dbReference type="PRO" id="PR:P39969"/>
<dbReference type="Proteomes" id="UP000002311">
    <property type="component" value="Chromosome V"/>
</dbReference>
<dbReference type="RNAct" id="P39969">
    <property type="molecule type" value="protein"/>
</dbReference>
<dbReference type="GO" id="GO:0005933">
    <property type="term" value="C:cellular bud"/>
    <property type="evidence" value="ECO:0000314"/>
    <property type="project" value="SGD"/>
</dbReference>
<dbReference type="GO" id="GO:0005935">
    <property type="term" value="C:cellular bud neck"/>
    <property type="evidence" value="ECO:0000314"/>
    <property type="project" value="SGD"/>
</dbReference>
<dbReference type="GO" id="GO:0005829">
    <property type="term" value="C:cytosol"/>
    <property type="evidence" value="ECO:0007669"/>
    <property type="project" value="GOC"/>
</dbReference>
<dbReference type="GO" id="GO:0005769">
    <property type="term" value="C:early endosome"/>
    <property type="evidence" value="ECO:0000318"/>
    <property type="project" value="GO_Central"/>
</dbReference>
<dbReference type="GO" id="GO:0055037">
    <property type="term" value="C:recycling endosome"/>
    <property type="evidence" value="ECO:0000318"/>
    <property type="project" value="GO_Central"/>
</dbReference>
<dbReference type="GO" id="GO:0030427">
    <property type="term" value="C:site of polarized growth"/>
    <property type="evidence" value="ECO:0000314"/>
    <property type="project" value="SGD"/>
</dbReference>
<dbReference type="GO" id="GO:0005802">
    <property type="term" value="C:trans-Golgi network"/>
    <property type="evidence" value="ECO:0000318"/>
    <property type="project" value="GO_Central"/>
</dbReference>
<dbReference type="GO" id="GO:0005543">
    <property type="term" value="F:phospholipid binding"/>
    <property type="evidence" value="ECO:0000314"/>
    <property type="project" value="SGD"/>
</dbReference>
<dbReference type="GO" id="GO:0007015">
    <property type="term" value="P:actin filament organization"/>
    <property type="evidence" value="ECO:0000316"/>
    <property type="project" value="SGD"/>
</dbReference>
<dbReference type="GO" id="GO:0007118">
    <property type="term" value="P:budding cell apical bud growth"/>
    <property type="evidence" value="ECO:0000316"/>
    <property type="project" value="SGD"/>
</dbReference>
<dbReference type="GO" id="GO:0007032">
    <property type="term" value="P:endosome organization"/>
    <property type="evidence" value="ECO:0000318"/>
    <property type="project" value="GO_Central"/>
</dbReference>
<dbReference type="GO" id="GO:0001881">
    <property type="term" value="P:receptor recycling"/>
    <property type="evidence" value="ECO:0000318"/>
    <property type="project" value="GO_Central"/>
</dbReference>
<dbReference type="GO" id="GO:0042147">
    <property type="term" value="P:retrograde transport, endosome to Golgi"/>
    <property type="evidence" value="ECO:0000318"/>
    <property type="project" value="GO_Central"/>
</dbReference>
<dbReference type="GO" id="GO:0000920">
    <property type="term" value="P:septum digestion after cytokinesis"/>
    <property type="evidence" value="ECO:0000316"/>
    <property type="project" value="SGD"/>
</dbReference>
<dbReference type="GO" id="GO:0099500">
    <property type="term" value="P:vesicle fusion to plasma membrane"/>
    <property type="evidence" value="ECO:0000315"/>
    <property type="project" value="SGD"/>
</dbReference>
<dbReference type="CDD" id="cd13316">
    <property type="entry name" value="PH_Boi"/>
    <property type="match status" value="1"/>
</dbReference>
<dbReference type="CDD" id="cd09535">
    <property type="entry name" value="SAM_BOI-like_fungal"/>
    <property type="match status" value="1"/>
</dbReference>
<dbReference type="CDD" id="cd11886">
    <property type="entry name" value="SH3_BOI"/>
    <property type="match status" value="1"/>
</dbReference>
<dbReference type="FunFam" id="1.10.150.50:FF:000090">
    <property type="entry name" value="Bem1 interacting protein"/>
    <property type="match status" value="1"/>
</dbReference>
<dbReference type="FunFam" id="2.30.29.30:FF:000230">
    <property type="entry name" value="Polarized growth protein (Boi2)"/>
    <property type="match status" value="1"/>
</dbReference>
<dbReference type="FunFam" id="2.30.30.40:FF:000259">
    <property type="entry name" value="Protein BOI2"/>
    <property type="match status" value="1"/>
</dbReference>
<dbReference type="Gene3D" id="2.30.29.30">
    <property type="entry name" value="Pleckstrin-homology domain (PH domain)/Phosphotyrosine-binding domain (PTB)"/>
    <property type="match status" value="1"/>
</dbReference>
<dbReference type="Gene3D" id="2.30.30.40">
    <property type="entry name" value="SH3 Domains"/>
    <property type="match status" value="1"/>
</dbReference>
<dbReference type="Gene3D" id="1.10.150.50">
    <property type="entry name" value="Transcription Factor, Ets-1"/>
    <property type="match status" value="1"/>
</dbReference>
<dbReference type="InterPro" id="IPR035551">
    <property type="entry name" value="Boi1/2_SH3"/>
</dbReference>
<dbReference type="InterPro" id="IPR045188">
    <property type="entry name" value="Boi1/Boi2-like"/>
</dbReference>
<dbReference type="InterPro" id="IPR011993">
    <property type="entry name" value="PH-like_dom_sf"/>
</dbReference>
<dbReference type="InterPro" id="IPR001849">
    <property type="entry name" value="PH_domain"/>
</dbReference>
<dbReference type="InterPro" id="IPR001660">
    <property type="entry name" value="SAM"/>
</dbReference>
<dbReference type="InterPro" id="IPR013761">
    <property type="entry name" value="SAM/pointed_sf"/>
</dbReference>
<dbReference type="InterPro" id="IPR036028">
    <property type="entry name" value="SH3-like_dom_sf"/>
</dbReference>
<dbReference type="InterPro" id="IPR001452">
    <property type="entry name" value="SH3_domain"/>
</dbReference>
<dbReference type="PANTHER" id="PTHR22902:SF27">
    <property type="entry name" value="PLECKSTRIN HOMOLOGY DOMAIN-CONTAINING FAMILY A MEMBER 3"/>
    <property type="match status" value="1"/>
</dbReference>
<dbReference type="PANTHER" id="PTHR22902">
    <property type="entry name" value="SESQUIPEDALIAN"/>
    <property type="match status" value="1"/>
</dbReference>
<dbReference type="Pfam" id="PF00169">
    <property type="entry name" value="PH"/>
    <property type="match status" value="1"/>
</dbReference>
<dbReference type="Pfam" id="PF07647">
    <property type="entry name" value="SAM_2"/>
    <property type="match status" value="1"/>
</dbReference>
<dbReference type="Pfam" id="PF00018">
    <property type="entry name" value="SH3_1"/>
    <property type="match status" value="1"/>
</dbReference>
<dbReference type="SMART" id="SM00233">
    <property type="entry name" value="PH"/>
    <property type="match status" value="1"/>
</dbReference>
<dbReference type="SMART" id="SM00454">
    <property type="entry name" value="SAM"/>
    <property type="match status" value="1"/>
</dbReference>
<dbReference type="SMART" id="SM00326">
    <property type="entry name" value="SH3"/>
    <property type="match status" value="1"/>
</dbReference>
<dbReference type="SUPFAM" id="SSF50729">
    <property type="entry name" value="PH domain-like"/>
    <property type="match status" value="1"/>
</dbReference>
<dbReference type="SUPFAM" id="SSF47769">
    <property type="entry name" value="SAM/Pointed domain"/>
    <property type="match status" value="1"/>
</dbReference>
<dbReference type="SUPFAM" id="SSF50044">
    <property type="entry name" value="SH3-domain"/>
    <property type="match status" value="1"/>
</dbReference>
<dbReference type="PROSITE" id="PS50003">
    <property type="entry name" value="PH_DOMAIN"/>
    <property type="match status" value="1"/>
</dbReference>
<dbReference type="PROSITE" id="PS50105">
    <property type="entry name" value="SAM_DOMAIN"/>
    <property type="match status" value="1"/>
</dbReference>
<dbReference type="PROSITE" id="PS50002">
    <property type="entry name" value="SH3"/>
    <property type="match status" value="1"/>
</dbReference>